<accession>P87137</accession>
<accession>Q9USA9</accession>
<protein>
    <recommendedName>
        <fullName>Uncharacterized protein C57A7.06</fullName>
    </recommendedName>
</protein>
<gene>
    <name type="ORF">SPAC57A7.06</name>
</gene>
<name>YDM6_SCHPO</name>
<comment type="subcellular location">
    <subcellularLocation>
        <location evidence="2 3">Nucleus</location>
        <location evidence="2 3">Nucleolus</location>
    </subcellularLocation>
</comment>
<comment type="similarity">
    <text evidence="5">To yeast YML093w.</text>
</comment>
<organism>
    <name type="scientific">Schizosaccharomyces pombe (strain 972 / ATCC 24843)</name>
    <name type="common">Fission yeast</name>
    <dbReference type="NCBI Taxonomy" id="284812"/>
    <lineage>
        <taxon>Eukaryota</taxon>
        <taxon>Fungi</taxon>
        <taxon>Dikarya</taxon>
        <taxon>Ascomycota</taxon>
        <taxon>Taphrinomycotina</taxon>
        <taxon>Schizosaccharomycetes</taxon>
        <taxon>Schizosaccharomycetales</taxon>
        <taxon>Schizosaccharomycetaceae</taxon>
        <taxon>Schizosaccharomyces</taxon>
    </lineage>
</organism>
<evidence type="ECO:0000256" key="1">
    <source>
        <dbReference type="SAM" id="MobiDB-lite"/>
    </source>
</evidence>
<evidence type="ECO:0000269" key="2">
    <source>
    </source>
</evidence>
<evidence type="ECO:0000269" key="3">
    <source>
    </source>
</evidence>
<evidence type="ECO:0000269" key="4">
    <source>
    </source>
</evidence>
<evidence type="ECO:0000305" key="5"/>
<keyword id="KW-0539">Nucleus</keyword>
<keyword id="KW-0597">Phosphoprotein</keyword>
<keyword id="KW-1185">Reference proteome</keyword>
<reference key="1">
    <citation type="journal article" date="2002" name="Nature">
        <title>The genome sequence of Schizosaccharomyces pombe.</title>
        <authorList>
            <person name="Wood V."/>
            <person name="Gwilliam R."/>
            <person name="Rajandream M.A."/>
            <person name="Lyne M.H."/>
            <person name="Lyne R."/>
            <person name="Stewart A."/>
            <person name="Sgouros J.G."/>
            <person name="Peat N."/>
            <person name="Hayles J."/>
            <person name="Baker S.G."/>
            <person name="Basham D."/>
            <person name="Bowman S."/>
            <person name="Brooks K."/>
            <person name="Brown D."/>
            <person name="Brown S."/>
            <person name="Chillingworth T."/>
            <person name="Churcher C.M."/>
            <person name="Collins M."/>
            <person name="Connor R."/>
            <person name="Cronin A."/>
            <person name="Davis P."/>
            <person name="Feltwell T."/>
            <person name="Fraser A."/>
            <person name="Gentles S."/>
            <person name="Goble A."/>
            <person name="Hamlin N."/>
            <person name="Harris D.E."/>
            <person name="Hidalgo J."/>
            <person name="Hodgson G."/>
            <person name="Holroyd S."/>
            <person name="Hornsby T."/>
            <person name="Howarth S."/>
            <person name="Huckle E.J."/>
            <person name="Hunt S."/>
            <person name="Jagels K."/>
            <person name="James K.D."/>
            <person name="Jones L."/>
            <person name="Jones M."/>
            <person name="Leather S."/>
            <person name="McDonald S."/>
            <person name="McLean J."/>
            <person name="Mooney P."/>
            <person name="Moule S."/>
            <person name="Mungall K.L."/>
            <person name="Murphy L.D."/>
            <person name="Niblett D."/>
            <person name="Odell C."/>
            <person name="Oliver K."/>
            <person name="O'Neil S."/>
            <person name="Pearson D."/>
            <person name="Quail M.A."/>
            <person name="Rabbinowitsch E."/>
            <person name="Rutherford K.M."/>
            <person name="Rutter S."/>
            <person name="Saunders D."/>
            <person name="Seeger K."/>
            <person name="Sharp S."/>
            <person name="Skelton J."/>
            <person name="Simmonds M.N."/>
            <person name="Squares R."/>
            <person name="Squares S."/>
            <person name="Stevens K."/>
            <person name="Taylor K."/>
            <person name="Taylor R.G."/>
            <person name="Tivey A."/>
            <person name="Walsh S.V."/>
            <person name="Warren T."/>
            <person name="Whitehead S."/>
            <person name="Woodward J.R."/>
            <person name="Volckaert G."/>
            <person name="Aert R."/>
            <person name="Robben J."/>
            <person name="Grymonprez B."/>
            <person name="Weltjens I."/>
            <person name="Vanstreels E."/>
            <person name="Rieger M."/>
            <person name="Schaefer M."/>
            <person name="Mueller-Auer S."/>
            <person name="Gabel C."/>
            <person name="Fuchs M."/>
            <person name="Duesterhoeft A."/>
            <person name="Fritzc C."/>
            <person name="Holzer E."/>
            <person name="Moestl D."/>
            <person name="Hilbert H."/>
            <person name="Borzym K."/>
            <person name="Langer I."/>
            <person name="Beck A."/>
            <person name="Lehrach H."/>
            <person name="Reinhardt R."/>
            <person name="Pohl T.M."/>
            <person name="Eger P."/>
            <person name="Zimmermann W."/>
            <person name="Wedler H."/>
            <person name="Wambutt R."/>
            <person name="Purnelle B."/>
            <person name="Goffeau A."/>
            <person name="Cadieu E."/>
            <person name="Dreano S."/>
            <person name="Gloux S."/>
            <person name="Lelaure V."/>
            <person name="Mottier S."/>
            <person name="Galibert F."/>
            <person name="Aves S.J."/>
            <person name="Xiang Z."/>
            <person name="Hunt C."/>
            <person name="Moore K."/>
            <person name="Hurst S.M."/>
            <person name="Lucas M."/>
            <person name="Rochet M."/>
            <person name="Gaillardin C."/>
            <person name="Tallada V.A."/>
            <person name="Garzon A."/>
            <person name="Thode G."/>
            <person name="Daga R.R."/>
            <person name="Cruzado L."/>
            <person name="Jimenez J."/>
            <person name="Sanchez M."/>
            <person name="del Rey F."/>
            <person name="Benito J."/>
            <person name="Dominguez A."/>
            <person name="Revuelta J.L."/>
            <person name="Moreno S."/>
            <person name="Armstrong J."/>
            <person name="Forsburg S.L."/>
            <person name="Cerutti L."/>
            <person name="Lowe T."/>
            <person name="McCombie W.R."/>
            <person name="Paulsen I."/>
            <person name="Potashkin J."/>
            <person name="Shpakovski G.V."/>
            <person name="Ussery D."/>
            <person name="Barrell B.G."/>
            <person name="Nurse P."/>
        </authorList>
    </citation>
    <scope>NUCLEOTIDE SEQUENCE [LARGE SCALE GENOMIC DNA]</scope>
    <source>
        <strain>972 / ATCC 24843</strain>
    </source>
</reference>
<reference key="2">
    <citation type="journal article" date="2000" name="Genes Cells">
        <title>Large-scale screening of intracellular protein localization in living fission yeast cells by the use of a GFP-fusion genomic DNA library.</title>
        <authorList>
            <person name="Ding D.-Q."/>
            <person name="Tomita Y."/>
            <person name="Yamamoto A."/>
            <person name="Chikashige Y."/>
            <person name="Haraguchi T."/>
            <person name="Hiraoka Y."/>
        </authorList>
    </citation>
    <scope>NUCLEOTIDE SEQUENCE [LARGE SCALE GENOMIC DNA] OF 101-333</scope>
    <scope>SUBCELLULAR LOCATION</scope>
    <source>
        <strain>ATCC 38364 / 968</strain>
    </source>
</reference>
<reference key="3">
    <citation type="journal article" date="2006" name="Nat. Biotechnol.">
        <title>ORFeome cloning and global analysis of protein localization in the fission yeast Schizosaccharomyces pombe.</title>
        <authorList>
            <person name="Matsuyama A."/>
            <person name="Arai R."/>
            <person name="Yashiroda Y."/>
            <person name="Shirai A."/>
            <person name="Kamata A."/>
            <person name="Sekido S."/>
            <person name="Kobayashi Y."/>
            <person name="Hashimoto A."/>
            <person name="Hamamoto M."/>
            <person name="Hiraoka Y."/>
            <person name="Horinouchi S."/>
            <person name="Yoshida M."/>
        </authorList>
    </citation>
    <scope>SUBCELLULAR LOCATION [LARGE SCALE ANALYSIS]</scope>
</reference>
<reference key="4">
    <citation type="journal article" date="2008" name="J. Proteome Res.">
        <title>Phosphoproteome analysis of fission yeast.</title>
        <authorList>
            <person name="Wilson-Grady J.T."/>
            <person name="Villen J."/>
            <person name="Gygi S.P."/>
        </authorList>
    </citation>
    <scope>PHOSPHORYLATION [LARGE SCALE ANALYSIS] AT SER-251; SER-555; SER-557; SER-758; SER-760 AND SER-764</scope>
    <scope>IDENTIFICATION BY MASS SPECTROMETRY</scope>
</reference>
<sequence>MARKGKVNTLPQPQGKHQRKGKKQLENKILHSYEEESAGFDSEELEDNDEQGYSFGVNSEDDEEIDSDEAFDEEDEKRFADWSFNASKSGKSNKDHKNLNNTKEISLNEEDDSDDSVNSDKLENEGSVGSSIDENELVDLDTLLDNDQPEKNESNTASTIRPPWIGNNDHATDKENLLESDASSSNDSESELTDSADNMNESDSESEIESSDSDHDDGENSDSKLDNLRNYIVSLNQKRKKDEADAESVLSSDDNDSIEEISIKKVKYDPHETNKESEYNLIGSSEKTIDITDLLDSIPMNEQLKVSLKPLVSESSSISSKKLDAPLAKSIQDRLERQAAYEQTKNDLEKWKPIVADNRKSDQLIFPMNETARPVPSNNGLASSFEPRTESERKMHQALLDAGLENESALKKQEELALNKLSVEEVAERTRQLRFMRELMFREERKAKRVAKIKSKTYRKIRKNRKEKEMALIPKSEEDLENERIKSEEARALERMTQRHKNTSSWTRKMLERASHGEGTREAVNEQIRKGDELMQRIHGKEISEMDGEDVSEFSDSDYDTNEQVSTAFEKIRNEEEPKLKGVLGMKFMRDASNRQKALVQDEMQAFEDELAGVPNEDDTSQKGEDGVPGVLIGNNTGRRSFKPSEEAAKLSLPSRKNPFVSDSAVLKVNKPEMKEGQKKAEARKKKESPLEATEETNPWLQVPDQRTSSAKKLDKNSSKADKKNHKLKMDKVASLQELVEEPKVQPDLIFEEKAFESASEAESDVDVSVPMLKPTKGRLSIKQRELVAKAFAGDDVVAEFEKDKEDWVQEDAPKEEDHSLPGWGSWGGVGVKQRKTKPKVKKIAGLDPSKRKDSKLKHVIINEKRNKKAAKLTADSVPFPFESREQYERSLNLPMGPEWTTRASHHKAVAPRVVTKRGKVINPIKAPN</sequence>
<dbReference type="EMBL" id="CU329670">
    <property type="protein sequence ID" value="CAB08764.1"/>
    <property type="molecule type" value="Genomic_DNA"/>
</dbReference>
<dbReference type="EMBL" id="AB027904">
    <property type="protein sequence ID" value="BAA87208.1"/>
    <property type="molecule type" value="Genomic_DNA"/>
</dbReference>
<dbReference type="PIR" id="T38948">
    <property type="entry name" value="T38948"/>
</dbReference>
<dbReference type="SMR" id="P87137"/>
<dbReference type="BioGRID" id="278816">
    <property type="interactions" value="4"/>
</dbReference>
<dbReference type="FunCoup" id="P87137">
    <property type="interactions" value="512"/>
</dbReference>
<dbReference type="STRING" id="284812.P87137"/>
<dbReference type="iPTMnet" id="P87137"/>
<dbReference type="PaxDb" id="4896-SPAC57A7.06.1"/>
<dbReference type="EnsemblFungi" id="SPAC57A7.06.1">
    <property type="protein sequence ID" value="SPAC57A7.06.1:pep"/>
    <property type="gene ID" value="SPAC57A7.06"/>
</dbReference>
<dbReference type="KEGG" id="spo:2542351"/>
<dbReference type="PomBase" id="SPAC57A7.06"/>
<dbReference type="VEuPathDB" id="FungiDB:SPAC57A7.06"/>
<dbReference type="eggNOG" id="KOG2172">
    <property type="taxonomic scope" value="Eukaryota"/>
</dbReference>
<dbReference type="HOGENOM" id="CLU_003783_0_0_1"/>
<dbReference type="InParanoid" id="P87137"/>
<dbReference type="OMA" id="QVIEPMD"/>
<dbReference type="PhylomeDB" id="P87137"/>
<dbReference type="Reactome" id="R-SPO-6791226">
    <property type="pathway name" value="Major pathway of rRNA processing in the nucleolus and cytosol"/>
</dbReference>
<dbReference type="PRO" id="PR:P87137"/>
<dbReference type="Proteomes" id="UP000002485">
    <property type="component" value="Chromosome I"/>
</dbReference>
<dbReference type="GO" id="GO:0005730">
    <property type="term" value="C:nucleolus"/>
    <property type="evidence" value="ECO:0007005"/>
    <property type="project" value="PomBase"/>
</dbReference>
<dbReference type="GO" id="GO:0005634">
    <property type="term" value="C:nucleus"/>
    <property type="evidence" value="ECO:0007005"/>
    <property type="project" value="PomBase"/>
</dbReference>
<dbReference type="GO" id="GO:0032040">
    <property type="term" value="C:small-subunit processome"/>
    <property type="evidence" value="ECO:0000318"/>
    <property type="project" value="GO_Central"/>
</dbReference>
<dbReference type="GO" id="GO:0030490">
    <property type="term" value="P:maturation of SSU-rRNA"/>
    <property type="evidence" value="ECO:0000266"/>
    <property type="project" value="PomBase"/>
</dbReference>
<dbReference type="InterPro" id="IPR006709">
    <property type="entry name" value="SSU_processome_Utp14"/>
</dbReference>
<dbReference type="PANTHER" id="PTHR14150">
    <property type="entry name" value="U3 SMALL NUCLEOLAR RNA-ASSOCIATED PROTEIN 14"/>
    <property type="match status" value="1"/>
</dbReference>
<dbReference type="PANTHER" id="PTHR14150:SF12">
    <property type="entry name" value="U3 SMALL NUCLEOLAR RNA-ASSOCIATED PROTEIN 14 HOMOLOG A"/>
    <property type="match status" value="1"/>
</dbReference>
<dbReference type="Pfam" id="PF04615">
    <property type="entry name" value="Utp14"/>
    <property type="match status" value="1"/>
</dbReference>
<proteinExistence type="evidence at protein level"/>
<feature type="chain" id="PRO_0000116641" description="Uncharacterized protein C57A7.06">
    <location>
        <begin position="1"/>
        <end position="929"/>
    </location>
</feature>
<feature type="region of interest" description="Disordered" evidence="1">
    <location>
        <begin position="1"/>
        <end position="257"/>
    </location>
</feature>
<feature type="region of interest" description="Disordered" evidence="1">
    <location>
        <begin position="602"/>
        <end position="729"/>
    </location>
</feature>
<feature type="region of interest" description="Disordered" evidence="1">
    <location>
        <begin position="805"/>
        <end position="843"/>
    </location>
</feature>
<feature type="compositionally biased region" description="Basic and acidic residues" evidence="1">
    <location>
        <begin position="23"/>
        <end position="34"/>
    </location>
</feature>
<feature type="compositionally biased region" description="Acidic residues" evidence="1">
    <location>
        <begin position="35"/>
        <end position="50"/>
    </location>
</feature>
<feature type="compositionally biased region" description="Acidic residues" evidence="1">
    <location>
        <begin position="59"/>
        <end position="75"/>
    </location>
</feature>
<feature type="compositionally biased region" description="Acidic residues" evidence="1">
    <location>
        <begin position="107"/>
        <end position="117"/>
    </location>
</feature>
<feature type="compositionally biased region" description="Acidic residues" evidence="1">
    <location>
        <begin position="133"/>
        <end position="144"/>
    </location>
</feature>
<feature type="compositionally biased region" description="Acidic residues" evidence="1">
    <location>
        <begin position="188"/>
        <end position="220"/>
    </location>
</feature>
<feature type="compositionally biased region" description="Acidic residues" evidence="1">
    <location>
        <begin position="605"/>
        <end position="619"/>
    </location>
</feature>
<feature type="compositionally biased region" description="Basic and acidic residues" evidence="1">
    <location>
        <begin position="670"/>
        <end position="681"/>
    </location>
</feature>
<feature type="compositionally biased region" description="Polar residues" evidence="1">
    <location>
        <begin position="696"/>
        <end position="711"/>
    </location>
</feature>
<feature type="compositionally biased region" description="Basic and acidic residues" evidence="1">
    <location>
        <begin position="712"/>
        <end position="729"/>
    </location>
</feature>
<feature type="compositionally biased region" description="Basic and acidic residues" evidence="1">
    <location>
        <begin position="805"/>
        <end position="820"/>
    </location>
</feature>
<feature type="compositionally biased region" description="Basic residues" evidence="1">
    <location>
        <begin position="833"/>
        <end position="843"/>
    </location>
</feature>
<feature type="modified residue" description="Phosphoserine" evidence="4">
    <location>
        <position position="251"/>
    </location>
</feature>
<feature type="modified residue" description="Phosphoserine" evidence="4">
    <location>
        <position position="555"/>
    </location>
</feature>
<feature type="modified residue" description="Phosphoserine" evidence="4">
    <location>
        <position position="557"/>
    </location>
</feature>
<feature type="modified residue" description="Phosphoserine" evidence="4">
    <location>
        <position position="758"/>
    </location>
</feature>
<feature type="modified residue" description="Phosphoserine" evidence="4">
    <location>
        <position position="760"/>
    </location>
</feature>
<feature type="modified residue" description="Phosphoserine" evidence="4">
    <location>
        <position position="764"/>
    </location>
</feature>